<comment type="function">
    <text evidence="1">Plays a central role in chromosome condensation, segregation and cell cycle progression. Functions as a homodimer, which is essential for chromosome partition. Involved in negative DNA supercoiling in vivo, and by this means organize and compact chromosomes. May achieve or facilitate chromosome segregation by condensation DNA from both sides of a centrally located replisome during cell division.</text>
</comment>
<comment type="subunit">
    <text evidence="1">Homodimerization via its hinge domain. Binds to DNA via its C-terminal region. Interacts, and probably forms a ternary complex, with MukE and MukF via its C-terminal region. The complex formation is stimulated by calcium or magnesium. Interacts with tubulin-related protein FtsZ.</text>
</comment>
<comment type="subcellular location">
    <subcellularLocation>
        <location evidence="1">Cytoplasm</location>
        <location evidence="1">Nucleoid</location>
    </subcellularLocation>
    <text evidence="1">Restricted to the nucleoid region.</text>
</comment>
<comment type="domain">
    <text evidence="1">The hinge domain, which separates the large intramolecular coiled coil regions, allows the homodimerization, forming a V-shaped homodimer.</text>
</comment>
<comment type="similarity">
    <text evidence="1">Belongs to the SMC family. MukB subfamily.</text>
</comment>
<reference key="1">
    <citation type="journal article" date="2000" name="Nature">
        <title>DNA sequence of both chromosomes of the cholera pathogen Vibrio cholerae.</title>
        <authorList>
            <person name="Heidelberg J.F."/>
            <person name="Eisen J.A."/>
            <person name="Nelson W.C."/>
            <person name="Clayton R.A."/>
            <person name="Gwinn M.L."/>
            <person name="Dodson R.J."/>
            <person name="Haft D.H."/>
            <person name="Hickey E.K."/>
            <person name="Peterson J.D."/>
            <person name="Umayam L.A."/>
            <person name="Gill S.R."/>
            <person name="Nelson K.E."/>
            <person name="Read T.D."/>
            <person name="Tettelin H."/>
            <person name="Richardson D.L."/>
            <person name="Ermolaeva M.D."/>
            <person name="Vamathevan J.J."/>
            <person name="Bass S."/>
            <person name="Qin H."/>
            <person name="Dragoi I."/>
            <person name="Sellers P."/>
            <person name="McDonald L.A."/>
            <person name="Utterback T.R."/>
            <person name="Fleischmann R.D."/>
            <person name="Nierman W.C."/>
            <person name="White O."/>
            <person name="Salzberg S.L."/>
            <person name="Smith H.O."/>
            <person name="Colwell R.R."/>
            <person name="Mekalanos J.J."/>
            <person name="Venter J.C."/>
            <person name="Fraser C.M."/>
        </authorList>
    </citation>
    <scope>NUCLEOTIDE SEQUENCE [LARGE SCALE GENOMIC DNA]</scope>
    <source>
        <strain>ATCC 39315 / El Tor Inaba N16961</strain>
    </source>
</reference>
<feature type="chain" id="PRO_0000068229" description="Chromosome partition protein MukB">
    <location>
        <begin position="1"/>
        <end position="1491"/>
    </location>
</feature>
<feature type="region of interest" description="Flexible hinge" evidence="1">
    <location>
        <begin position="667"/>
        <end position="784"/>
    </location>
</feature>
<feature type="region of interest" description="Disordered" evidence="2">
    <location>
        <begin position="1059"/>
        <end position="1080"/>
    </location>
</feature>
<feature type="coiled-coil region" evidence="1">
    <location>
        <begin position="302"/>
        <end position="450"/>
    </location>
</feature>
<feature type="coiled-coil region" evidence="1">
    <location>
        <begin position="490"/>
        <end position="600"/>
    </location>
</feature>
<feature type="coiled-coil region" evidence="1">
    <location>
        <begin position="781"/>
        <end position="806"/>
    </location>
</feature>
<feature type="coiled-coil region" evidence="1">
    <location>
        <begin position="836"/>
        <end position="1109"/>
    </location>
</feature>
<feature type="coiled-coil region" evidence="1">
    <location>
        <begin position="1210"/>
        <end position="1239"/>
    </location>
</feature>
<feature type="binding site" evidence="1">
    <location>
        <begin position="34"/>
        <end position="41"/>
    </location>
    <ligand>
        <name>ATP</name>
        <dbReference type="ChEBI" id="CHEBI:30616"/>
    </ligand>
</feature>
<accession>Q9KRC8</accession>
<keyword id="KW-0067">ATP-binding</keyword>
<keyword id="KW-0131">Cell cycle</keyword>
<keyword id="KW-0132">Cell division</keyword>
<keyword id="KW-0159">Chromosome partition</keyword>
<keyword id="KW-0175">Coiled coil</keyword>
<keyword id="KW-0963">Cytoplasm</keyword>
<keyword id="KW-0226">DNA condensation</keyword>
<keyword id="KW-0238">DNA-binding</keyword>
<keyword id="KW-0547">Nucleotide-binding</keyword>
<keyword id="KW-1185">Reference proteome</keyword>
<dbReference type="EMBL" id="AE003852">
    <property type="protein sequence ID" value="AAF94864.1"/>
    <property type="molecule type" value="Genomic_DNA"/>
</dbReference>
<dbReference type="PIR" id="D82166">
    <property type="entry name" value="D82166"/>
</dbReference>
<dbReference type="RefSeq" id="NP_231350.1">
    <property type="nucleotide sequence ID" value="NC_002505.1"/>
</dbReference>
<dbReference type="RefSeq" id="WP_000572788.1">
    <property type="nucleotide sequence ID" value="NZ_LT906614.1"/>
</dbReference>
<dbReference type="SMR" id="Q9KRC8"/>
<dbReference type="STRING" id="243277.VC_1714"/>
<dbReference type="DNASU" id="2613719"/>
<dbReference type="EnsemblBacteria" id="AAF94864">
    <property type="protein sequence ID" value="AAF94864"/>
    <property type="gene ID" value="VC_1714"/>
</dbReference>
<dbReference type="KEGG" id="vch:VC_1714"/>
<dbReference type="PATRIC" id="fig|243277.26.peg.1640"/>
<dbReference type="eggNOG" id="COG3096">
    <property type="taxonomic scope" value="Bacteria"/>
</dbReference>
<dbReference type="HOGENOM" id="CLU_004430_0_0_6"/>
<dbReference type="Proteomes" id="UP000000584">
    <property type="component" value="Chromosome 1"/>
</dbReference>
<dbReference type="GO" id="GO:0005737">
    <property type="term" value="C:cytoplasm"/>
    <property type="evidence" value="ECO:0000318"/>
    <property type="project" value="GO_Central"/>
</dbReference>
<dbReference type="GO" id="GO:0009295">
    <property type="term" value="C:nucleoid"/>
    <property type="evidence" value="ECO:0007669"/>
    <property type="project" value="UniProtKB-SubCell"/>
</dbReference>
<dbReference type="GO" id="GO:0005524">
    <property type="term" value="F:ATP binding"/>
    <property type="evidence" value="ECO:0007669"/>
    <property type="project" value="UniProtKB-UniRule"/>
</dbReference>
<dbReference type="GO" id="GO:0003677">
    <property type="term" value="F:DNA binding"/>
    <property type="evidence" value="ECO:0007669"/>
    <property type="project" value="UniProtKB-UniRule"/>
</dbReference>
<dbReference type="GO" id="GO:0051301">
    <property type="term" value="P:cell division"/>
    <property type="evidence" value="ECO:0007669"/>
    <property type="project" value="UniProtKB-KW"/>
</dbReference>
<dbReference type="GO" id="GO:0030261">
    <property type="term" value="P:chromosome condensation"/>
    <property type="evidence" value="ECO:0007669"/>
    <property type="project" value="UniProtKB-KW"/>
</dbReference>
<dbReference type="GO" id="GO:0007059">
    <property type="term" value="P:chromosome segregation"/>
    <property type="evidence" value="ECO:0007669"/>
    <property type="project" value="UniProtKB-UniRule"/>
</dbReference>
<dbReference type="GO" id="GO:0006260">
    <property type="term" value="P:DNA replication"/>
    <property type="evidence" value="ECO:0007669"/>
    <property type="project" value="UniProtKB-UniRule"/>
</dbReference>
<dbReference type="FunFam" id="3.30.70.3500:FF:000001">
    <property type="entry name" value="Chromosome partition protein MukB"/>
    <property type="match status" value="1"/>
</dbReference>
<dbReference type="FunFam" id="3.40.1140.10:FF:000001">
    <property type="entry name" value="Chromosome partition protein MukB"/>
    <property type="match status" value="1"/>
</dbReference>
<dbReference type="FunFam" id="3.40.1140.10:FF:000002">
    <property type="entry name" value="Chromosome partition protein MukB"/>
    <property type="match status" value="1"/>
</dbReference>
<dbReference type="Gene3D" id="1.20.58.850">
    <property type="match status" value="1"/>
</dbReference>
<dbReference type="Gene3D" id="3.40.1140.10">
    <property type="match status" value="2"/>
</dbReference>
<dbReference type="Gene3D" id="1.20.5.420">
    <property type="entry name" value="Immunoglobulin FC, subunit C"/>
    <property type="match status" value="1"/>
</dbReference>
<dbReference type="Gene3D" id="3.30.70.3500">
    <property type="entry name" value="MukB, hinge domain"/>
    <property type="match status" value="1"/>
</dbReference>
<dbReference type="HAMAP" id="MF_01800">
    <property type="entry name" value="MukB"/>
    <property type="match status" value="1"/>
</dbReference>
<dbReference type="InterPro" id="IPR012090">
    <property type="entry name" value="MukB"/>
</dbReference>
<dbReference type="InterPro" id="IPR050308">
    <property type="entry name" value="MukB/SMC"/>
</dbReference>
<dbReference type="InterPro" id="IPR032520">
    <property type="entry name" value="MukB_hinge"/>
</dbReference>
<dbReference type="InterPro" id="IPR042501">
    <property type="entry name" value="MukB_hinge_sf"/>
</dbReference>
<dbReference type="InterPro" id="IPR007406">
    <property type="entry name" value="MukB_N_dom"/>
</dbReference>
<dbReference type="InterPro" id="IPR027417">
    <property type="entry name" value="P-loop_NTPase"/>
</dbReference>
<dbReference type="NCBIfam" id="NF003422">
    <property type="entry name" value="PRK04863.1"/>
    <property type="match status" value="1"/>
</dbReference>
<dbReference type="PANTHER" id="PTHR42963">
    <property type="entry name" value="CHROMOSOME PARTITION PROTEIN MUKB"/>
    <property type="match status" value="1"/>
</dbReference>
<dbReference type="PANTHER" id="PTHR42963:SF1">
    <property type="entry name" value="DUF4476 DOMAIN-CONTAINING PROTEIN"/>
    <property type="match status" value="1"/>
</dbReference>
<dbReference type="Pfam" id="PF04310">
    <property type="entry name" value="MukB"/>
    <property type="match status" value="1"/>
</dbReference>
<dbReference type="Pfam" id="PF16330">
    <property type="entry name" value="MukB_hinge"/>
    <property type="match status" value="1"/>
</dbReference>
<dbReference type="Pfam" id="PF13558">
    <property type="entry name" value="SbcC_Walker_B"/>
    <property type="match status" value="1"/>
</dbReference>
<dbReference type="PIRSF" id="PIRSF005246">
    <property type="entry name" value="MukB"/>
    <property type="match status" value="1"/>
</dbReference>
<dbReference type="SUPFAM" id="SSF52540">
    <property type="entry name" value="P-loop containing nucleoside triphosphate hydrolases"/>
    <property type="match status" value="2"/>
</dbReference>
<name>MUKB_VIBCH</name>
<evidence type="ECO:0000255" key="1">
    <source>
        <dbReference type="HAMAP-Rule" id="MF_01800"/>
    </source>
</evidence>
<evidence type="ECO:0000256" key="2">
    <source>
        <dbReference type="SAM" id="MobiDB-lite"/>
    </source>
</evidence>
<sequence>MIERGKYQSLTMINWNGFFARTFDIDNLVTTLSGGNGAGKSTTMAAFITALIPDQSLLHFRNTTEAGSSQASRDKGLYGKLQAGACYAALDVVNSRNQRLLFAVKLQQVAGRDKKVDIKPFLIQGLPSHVKPTDVLVETVSDKHARVRQINEVKDAVGQIEGAHFKSFPSIVDYHAQMFEFGVIPKKLRNSSDRSKFYRLIEASLYGGISSAITRSLRDYLLPQNGGVKKAFQDMESALRENRMTLEAIKTTQADRDLFKHLITESTNYVAADYMRHANDRRNKVGQTLVLRGELFSSRETLIEQNSLLNRVHEELELLVEQESALEQDYQGASDHLQLVQNALRQQEKIERYQEDLEELNFRLEEQMMVVEEANERVMQAEERAIISEEEVDSLKSQLADYQQALDVQQTRALQYQQAVQALDKARRLLDKSELTAESAQALATQLKAEQETRTSELLALKHKLDMSSAAAQQFNHAFELVKRVLGEVARSEAAKQAQQVIRQAREAQNVVQNEAQWQAQQRDLERQLEQQRSVRELATQYHKQHRVVLDDAATVELERERHSALLEELETEQENCREQRGQLRHQEQELQTQIARFESIAPAWIKANDALETLREQSGAELADSQSVMAHMQQVLELEKAQSMAKDKLAERRTKLDSEIERLASPGGSNDPRLKGLADTLGGVLLSEIYDDITIDDAPYFSAMYGPARHAIVVSDLSGIKEKLVELDDCPEDLYLIEGDVDAFDDSSFNAEELEGAVCVQLNQRQMRYSRFPAIPLFGRAAREQRLELLREERDDVVEQHAKASFDSQKLQRLYASFNQFVAMHLQVAFDADPEQALATARDKRNQLLRSISEFEAQEQQLRSQLQASKQALAALDKLAPQMGLLDEETLEARYHELEEKLQQLSEAKAFIAAHGRTISELEKVAAVLDADPEQFDALEQQYQQADQALQQLKAQIFALSDLLERRHHFAYSDSVDLLNQSSELSEQLKAKLVQAESERTRSREELKQAQAQLSQYNQLLASLKSSHQAKLETVQEFKQELQEFGVHADEGAIERAQRRRDELQERLHTSRSRKSEYERTITSTELEMKALVKRMKKVEKDYQDLRTFVVNAKAGWCSVLRLARQNDVERRLHKRELAYLSADELRSMSDKSLGALRLAVANNEDLRDALRQSEDNSRPERKVLFYIAVYQHLRERIRQDIIRTDDPVEAIEEMEVELARLTEELTQREQRLAISSDSVASIIRKTIQREQNRIRMLNQGLSNISFGQVNGVRLNVKVRESHEILLAGLSEQQAQHKDLFESARYTFSEAMAKLFQRVNPHIDMGQRSPQVLGEELLDYRNYLELSVEVNRGSDGWLQAESGALSTGEAIGTGQSILLMVVQSWEEESRRLRSKDIVPCRLLFLDEAARLDAKSIATLFELCERLDMQLLIAAPENISPEKGTTYKLVRKVFKDHEHVHVVGLRGFAQTEKPKTAEQKFAEELAGELTE</sequence>
<proteinExistence type="inferred from homology"/>
<gene>
    <name evidence="1" type="primary">mukB</name>
    <name type="ordered locus">VC_1714</name>
</gene>
<protein>
    <recommendedName>
        <fullName evidence="1">Chromosome partition protein MukB</fullName>
    </recommendedName>
    <alternativeName>
        <fullName evidence="1">Structural maintenance of chromosome-related protein</fullName>
    </alternativeName>
</protein>
<organism>
    <name type="scientific">Vibrio cholerae serotype O1 (strain ATCC 39315 / El Tor Inaba N16961)</name>
    <dbReference type="NCBI Taxonomy" id="243277"/>
    <lineage>
        <taxon>Bacteria</taxon>
        <taxon>Pseudomonadati</taxon>
        <taxon>Pseudomonadota</taxon>
        <taxon>Gammaproteobacteria</taxon>
        <taxon>Vibrionales</taxon>
        <taxon>Vibrionaceae</taxon>
        <taxon>Vibrio</taxon>
    </lineage>
</organism>